<organism>
    <name type="scientific">Escherichia coli O127:H6 (strain E2348/69 / EPEC)</name>
    <dbReference type="NCBI Taxonomy" id="574521"/>
    <lineage>
        <taxon>Bacteria</taxon>
        <taxon>Pseudomonadati</taxon>
        <taxon>Pseudomonadota</taxon>
        <taxon>Gammaproteobacteria</taxon>
        <taxon>Enterobacterales</taxon>
        <taxon>Enterobacteriaceae</taxon>
        <taxon>Escherichia</taxon>
    </lineage>
</organism>
<feature type="chain" id="PRO_1000147954" description="Fumarate reductase subunit D">
    <location>
        <begin position="1"/>
        <end position="119"/>
    </location>
</feature>
<feature type="transmembrane region" description="Helical" evidence="1">
    <location>
        <begin position="26"/>
        <end position="46"/>
    </location>
</feature>
<feature type="transmembrane region" description="Helical" evidence="1">
    <location>
        <begin position="55"/>
        <end position="75"/>
    </location>
</feature>
<feature type="transmembrane region" description="Helical" evidence="1">
    <location>
        <begin position="99"/>
        <end position="119"/>
    </location>
</feature>
<protein>
    <recommendedName>
        <fullName evidence="1">Fumarate reductase subunit D</fullName>
    </recommendedName>
    <alternativeName>
        <fullName evidence="1">Fumarate reductase 13 kDa hydrophobic protein</fullName>
    </alternativeName>
    <alternativeName>
        <fullName evidence="1">Quinol-fumarate reductase subunit D</fullName>
        <shortName evidence="1">QFR subunit D</shortName>
    </alternativeName>
</protein>
<dbReference type="EMBL" id="FM180568">
    <property type="protein sequence ID" value="CAS12027.1"/>
    <property type="molecule type" value="Genomic_DNA"/>
</dbReference>
<dbReference type="RefSeq" id="WP_000609663.1">
    <property type="nucleotide sequence ID" value="NC_011601.1"/>
</dbReference>
<dbReference type="SMR" id="B7UPX3"/>
<dbReference type="GeneID" id="75169672"/>
<dbReference type="KEGG" id="ecg:E2348C_4479"/>
<dbReference type="HOGENOM" id="CLU_168367_0_0_6"/>
<dbReference type="Proteomes" id="UP000008205">
    <property type="component" value="Chromosome"/>
</dbReference>
<dbReference type="GO" id="GO:0045283">
    <property type="term" value="C:fumarate reductase complex"/>
    <property type="evidence" value="ECO:0007669"/>
    <property type="project" value="UniProtKB-UniRule"/>
</dbReference>
<dbReference type="GO" id="GO:0005886">
    <property type="term" value="C:plasma membrane"/>
    <property type="evidence" value="ECO:0007669"/>
    <property type="project" value="UniProtKB-SubCell"/>
</dbReference>
<dbReference type="GO" id="GO:0000104">
    <property type="term" value="F:succinate dehydrogenase activity"/>
    <property type="evidence" value="ECO:0007669"/>
    <property type="project" value="UniProtKB-UniRule"/>
</dbReference>
<dbReference type="GO" id="GO:0006106">
    <property type="term" value="P:fumarate metabolic process"/>
    <property type="evidence" value="ECO:0007669"/>
    <property type="project" value="InterPro"/>
</dbReference>
<dbReference type="CDD" id="cd00547">
    <property type="entry name" value="QFR_TypeD_subunitD"/>
    <property type="match status" value="1"/>
</dbReference>
<dbReference type="FunFam" id="1.20.1300.10:FF:000002">
    <property type="entry name" value="Fumarate reductase subunit D"/>
    <property type="match status" value="1"/>
</dbReference>
<dbReference type="Gene3D" id="1.20.1300.10">
    <property type="entry name" value="Fumarate reductase/succinate dehydrogenase, transmembrane subunit"/>
    <property type="match status" value="1"/>
</dbReference>
<dbReference type="HAMAP" id="MF_00709">
    <property type="entry name" value="Fumarate_red_D"/>
    <property type="match status" value="1"/>
</dbReference>
<dbReference type="InterPro" id="IPR003418">
    <property type="entry name" value="Fumarate_red_D"/>
</dbReference>
<dbReference type="InterPro" id="IPR034804">
    <property type="entry name" value="SQR/QFR_C/D"/>
</dbReference>
<dbReference type="NCBIfam" id="NF003977">
    <property type="entry name" value="PRK05470.1-1"/>
    <property type="match status" value="1"/>
</dbReference>
<dbReference type="Pfam" id="PF02313">
    <property type="entry name" value="Fumarate_red_D"/>
    <property type="match status" value="1"/>
</dbReference>
<dbReference type="PIRSF" id="PIRSF000179">
    <property type="entry name" value="FrdD"/>
    <property type="match status" value="1"/>
</dbReference>
<dbReference type="SUPFAM" id="SSF81343">
    <property type="entry name" value="Fumarate reductase respiratory complex transmembrane subunits"/>
    <property type="match status" value="1"/>
</dbReference>
<sequence length="119" mass="13107">MINPNPKRSDEPVFWGLFGAGGMWSAIIAPVMILLVGILLPLGLFPGDALSYERVLAFAQSFIGRVFLFLMIVLPLWCGLHRMHHAMHDLKIHVPAGKWVFYGLAAILTVVTLIGVVTI</sequence>
<evidence type="ECO:0000255" key="1">
    <source>
        <dbReference type="HAMAP-Rule" id="MF_00709"/>
    </source>
</evidence>
<gene>
    <name evidence="1" type="primary">frdD</name>
    <name type="ordered locus">E2348C_4479</name>
</gene>
<accession>B7UPX3</accession>
<reference key="1">
    <citation type="journal article" date="2009" name="J. Bacteriol.">
        <title>Complete genome sequence and comparative genome analysis of enteropathogenic Escherichia coli O127:H6 strain E2348/69.</title>
        <authorList>
            <person name="Iguchi A."/>
            <person name="Thomson N.R."/>
            <person name="Ogura Y."/>
            <person name="Saunders D."/>
            <person name="Ooka T."/>
            <person name="Henderson I.R."/>
            <person name="Harris D."/>
            <person name="Asadulghani M."/>
            <person name="Kurokawa K."/>
            <person name="Dean P."/>
            <person name="Kenny B."/>
            <person name="Quail M.A."/>
            <person name="Thurston S."/>
            <person name="Dougan G."/>
            <person name="Hayashi T."/>
            <person name="Parkhill J."/>
            <person name="Frankel G."/>
        </authorList>
    </citation>
    <scope>NUCLEOTIDE SEQUENCE [LARGE SCALE GENOMIC DNA]</scope>
    <source>
        <strain>E2348/69 / EPEC</strain>
    </source>
</reference>
<proteinExistence type="inferred from homology"/>
<name>FRDD_ECO27</name>
<keyword id="KW-0997">Cell inner membrane</keyword>
<keyword id="KW-1003">Cell membrane</keyword>
<keyword id="KW-0472">Membrane</keyword>
<keyword id="KW-1185">Reference proteome</keyword>
<keyword id="KW-0812">Transmembrane</keyword>
<keyword id="KW-1133">Transmembrane helix</keyword>
<comment type="function">
    <text evidence="1">Two distinct, membrane-bound, FAD-containing enzymes are responsible for the catalysis of fumarate and succinate interconversion; fumarate reductase is used in anaerobic growth, and succinate dehydrogenase is used in aerobic growth. Anchors the catalytic components of the fumarate reductase complex to the cell inner membrane, binds quinones.</text>
</comment>
<comment type="subunit">
    <text evidence="1">Part of an enzyme complex containing four subunits: a flavoprotein (FrdA), an iron-sulfur protein (FrdB), and two hydrophobic anchor proteins (FrdC and FrdD).</text>
</comment>
<comment type="subcellular location">
    <subcellularLocation>
        <location evidence="1">Cell inner membrane</location>
        <topology evidence="1">Multi-pass membrane protein</topology>
    </subcellularLocation>
</comment>
<comment type="similarity">
    <text evidence="1">Belongs to the FrdD family.</text>
</comment>